<accession>P68444</accession>
<accession>P21003</accession>
<accession>Q76ZL6</accession>
<gene>
    <name type="primary">OPG192</name>
    <name type="ordered locus">VACWR189</name>
    <name type="ORF">B7R</name>
</gene>
<organismHost>
    <name type="scientific">Bos taurus</name>
    <name type="common">Bovine</name>
    <dbReference type="NCBI Taxonomy" id="9913"/>
</organismHost>
<proteinExistence type="inferred from homology"/>
<comment type="subcellular location">
    <subcellularLocation>
        <location evidence="2">Host endoplasmic reticulum</location>
    </subcellularLocation>
</comment>
<comment type="similarity">
    <text evidence="3">Belongs to the orthopoxvirus OPG192 family.</text>
</comment>
<keyword id="KW-1038">Host endoplasmic reticulum</keyword>
<keyword id="KW-1185">Reference proteome</keyword>
<keyword id="KW-0732">Signal</keyword>
<feature type="signal peptide" evidence="1">
    <location>
        <begin position="1"/>
        <end position="16"/>
    </location>
</feature>
<feature type="chain" id="PRO_0000040607" description="Protein OPG192">
    <location>
        <begin position="17"/>
        <end position="182"/>
    </location>
</feature>
<name>PG192_VACCW</name>
<dbReference type="EMBL" id="D11079">
    <property type="protein sequence ID" value="BAA01837.1"/>
    <property type="molecule type" value="Genomic_DNA"/>
</dbReference>
<dbReference type="EMBL" id="M58056">
    <property type="protein sequence ID" value="AAA47966.1"/>
    <property type="molecule type" value="Genomic_DNA"/>
</dbReference>
<dbReference type="EMBL" id="AY243312">
    <property type="protein sequence ID" value="AAO89468.1"/>
    <property type="molecule type" value="Genomic_DNA"/>
</dbReference>
<dbReference type="PIR" id="JQ1801">
    <property type="entry name" value="JQ1801"/>
</dbReference>
<dbReference type="RefSeq" id="YP_233071.1">
    <property type="nucleotide sequence ID" value="NC_006998.1"/>
</dbReference>
<dbReference type="DNASU" id="3707660"/>
<dbReference type="GeneID" id="3707660"/>
<dbReference type="KEGG" id="vg:3707660"/>
<dbReference type="Proteomes" id="UP000000344">
    <property type="component" value="Genome"/>
</dbReference>
<dbReference type="GO" id="GO:0044165">
    <property type="term" value="C:host cell endoplasmic reticulum"/>
    <property type="evidence" value="ECO:0007669"/>
    <property type="project" value="UniProtKB-SubCell"/>
</dbReference>
<dbReference type="InterPro" id="IPR010806">
    <property type="entry name" value="Poxvirus_TNF-rcpt-II_C"/>
</dbReference>
<dbReference type="InterPro" id="IPR009176">
    <property type="entry name" value="Vaccinia_virus_B7/C8"/>
</dbReference>
<dbReference type="Pfam" id="PF07190">
    <property type="entry name" value="CrmD_SECRET"/>
    <property type="match status" value="1"/>
</dbReference>
<dbReference type="PIRSF" id="PIRSF003778">
    <property type="entry name" value="VAC_C8L"/>
    <property type="match status" value="1"/>
</dbReference>
<evidence type="ECO:0000255" key="1"/>
<evidence type="ECO:0000269" key="2">
    <source>
    </source>
</evidence>
<evidence type="ECO:0000305" key="3"/>
<protein>
    <recommendedName>
        <fullName>Protein OPG192</fullName>
    </recommendedName>
</protein>
<sequence>MYKKLITFLFVIGALASYSNNEYTPFNKLSVKLYIDGVDNIENSYTDDNNELVLNFKEYTISIITESCDVGFDSIDIDVINDYKIIDMYTIDSSTIQRRGHTCRISTKLSCHYDKYPYIHKYDGDERQYSITAEGKCYKGIKYEISMINDDTLLRKHTLKIGSTYIFDRHGHSNTYYSKYDF</sequence>
<organism>
    <name type="scientific">Vaccinia virus (strain Western Reserve)</name>
    <name type="common">VACV</name>
    <name type="synonym">Vaccinia virus (strain WR)</name>
    <dbReference type="NCBI Taxonomy" id="10254"/>
    <lineage>
        <taxon>Viruses</taxon>
        <taxon>Varidnaviria</taxon>
        <taxon>Bamfordvirae</taxon>
        <taxon>Nucleocytoviricota</taxon>
        <taxon>Pokkesviricetes</taxon>
        <taxon>Chitovirales</taxon>
        <taxon>Poxviridae</taxon>
        <taxon>Chordopoxvirinae</taxon>
        <taxon>Orthopoxvirus</taxon>
        <taxon>Vaccinia virus</taxon>
    </lineage>
</organism>
<reference key="1">
    <citation type="journal article" date="1991" name="J. Gen. Virol.">
        <title>Nucleotide sequence of 42 kbp of vaccinia virus strain WR from near the right inverted terminal repeat.</title>
        <authorList>
            <person name="Smith G.L."/>
            <person name="Chan Y.S."/>
            <person name="Howard S.T."/>
        </authorList>
    </citation>
    <scope>NUCLEOTIDE SEQUENCE [GENOMIC DNA]</scope>
</reference>
<reference key="2">
    <citation type="journal article" date="1991" name="Virology">
        <title>Vaccinia virus homologues of the Shope fibroma virus inverted terminal repeat proteins and a discontinuous ORF related to the tumor necrosis factor receptor family.</title>
        <authorList>
            <person name="Howard S.T."/>
            <person name="Chan Y.S."/>
            <person name="Smith G.L."/>
        </authorList>
    </citation>
    <scope>NUCLEOTIDE SEQUENCE [GENOMIC DNA]</scope>
</reference>
<reference key="3">
    <citation type="submission" date="2003-02" db="EMBL/GenBank/DDBJ databases">
        <title>Sequencing of the coding region of Vaccinia-WR to an average 9-fold redundancy and an error rate of 0.16/10kb.</title>
        <authorList>
            <person name="Esposito J.J."/>
            <person name="Frace A.M."/>
            <person name="Sammons S.A."/>
            <person name="Olsen-Rasmussen M."/>
            <person name="Osborne J."/>
            <person name="Wohlhueter R."/>
        </authorList>
    </citation>
    <scope>NUCLEOTIDE SEQUENCE [LARGE SCALE GENOMIC DNA]</scope>
</reference>
<reference key="4">
    <citation type="journal article" date="2000" name="Virology">
        <title>Vaccinia virus gene B7R encodes an 18-kDa protein that is resident in the endoplasmic reticulum and affects virus virulence.</title>
        <authorList>
            <person name="Price N."/>
            <person name="Tscharke D.C."/>
            <person name="Hollinshead M."/>
            <person name="Smith G.L."/>
        </authorList>
    </citation>
    <scope>SUBCELLULAR LOCATION</scope>
</reference>